<comment type="subcellular location">
    <subcellularLocation>
        <location evidence="1">Membrane</location>
        <topology evidence="1">Single-pass membrane protein</topology>
    </subcellularLocation>
</comment>
<comment type="similarity">
    <text evidence="5">Belongs to the FNDC3 family.</text>
</comment>
<accession>Q6DFV6</accession>
<feature type="chain" id="PRO_0000379879" description="Fibronectin type III domain containing protein 3C1">
    <location>
        <begin position="1"/>
        <end position="1356"/>
    </location>
</feature>
<feature type="transmembrane region" description="Helical" evidence="2">
    <location>
        <begin position="1330"/>
        <end position="1350"/>
    </location>
</feature>
<feature type="topological domain" description="Cytoplasmic" evidence="2">
    <location>
        <begin position="1351"/>
        <end position="1356"/>
    </location>
</feature>
<feature type="domain" description="Fibronectin type-III 1" evidence="3">
    <location>
        <begin position="454"/>
        <end position="549"/>
    </location>
</feature>
<feature type="domain" description="Fibronectin type-III 2" evidence="3">
    <location>
        <begin position="553"/>
        <end position="648"/>
    </location>
</feature>
<feature type="domain" description="Fibronectin type-III 3" evidence="3">
    <location>
        <begin position="650"/>
        <end position="741"/>
    </location>
</feature>
<feature type="domain" description="Fibronectin type-III 4" evidence="3">
    <location>
        <begin position="745"/>
        <end position="842"/>
    </location>
</feature>
<feature type="domain" description="Fibronectin type-III 5" evidence="3">
    <location>
        <begin position="914"/>
        <end position="1007"/>
    </location>
</feature>
<feature type="domain" description="Fibronectin type-III 6" evidence="3">
    <location>
        <begin position="1017"/>
        <end position="1103"/>
    </location>
</feature>
<feature type="domain" description="Fibronectin type-III 7" evidence="3">
    <location>
        <begin position="1104"/>
        <end position="1199"/>
    </location>
</feature>
<feature type="domain" description="Fibronectin type-III 8" evidence="3">
    <location>
        <begin position="1202"/>
        <end position="1299"/>
    </location>
</feature>
<feature type="region of interest" description="Disordered" evidence="4">
    <location>
        <begin position="303"/>
        <end position="341"/>
    </location>
</feature>
<feature type="region of interest" description="Disordered" evidence="4">
    <location>
        <begin position="356"/>
        <end position="402"/>
    </location>
</feature>
<feature type="region of interest" description="Disordered" evidence="4">
    <location>
        <begin position="428"/>
        <end position="452"/>
    </location>
</feature>
<feature type="region of interest" description="Disordered" evidence="4">
    <location>
        <begin position="825"/>
        <end position="894"/>
    </location>
</feature>
<feature type="region of interest" description="Disordered" evidence="4">
    <location>
        <begin position="1299"/>
        <end position="1320"/>
    </location>
</feature>
<feature type="compositionally biased region" description="Low complexity" evidence="4">
    <location>
        <begin position="308"/>
        <end position="341"/>
    </location>
</feature>
<feature type="compositionally biased region" description="Polar residues" evidence="4">
    <location>
        <begin position="370"/>
        <end position="393"/>
    </location>
</feature>
<feature type="compositionally biased region" description="Basic and acidic residues" evidence="4">
    <location>
        <begin position="439"/>
        <end position="448"/>
    </location>
</feature>
<feature type="compositionally biased region" description="Polar residues" evidence="4">
    <location>
        <begin position="825"/>
        <end position="838"/>
    </location>
</feature>
<feature type="compositionally biased region" description="Basic and acidic residues" evidence="4">
    <location>
        <begin position="883"/>
        <end position="894"/>
    </location>
</feature>
<proteinExistence type="evidence at transcript level"/>
<reference key="1">
    <citation type="journal article" date="2006" name="Dev. Biol.">
        <title>FNDC3A is required for adhesion between spermatids and Sertoli cells.</title>
        <authorList>
            <person name="Obholz K.L."/>
            <person name="Akopyan A."/>
            <person name="Waymire K.G."/>
            <person name="MacGregor G.R."/>
        </authorList>
    </citation>
    <scope>NUCLEOTIDE SEQUENCE [MRNA]</scope>
    <source>
        <strain>C57BL/6J</strain>
    </source>
</reference>
<reference key="2">
    <citation type="journal article" date="2009" name="PLoS Biol.">
        <title>Lineage-specific biology revealed by a finished genome assembly of the mouse.</title>
        <authorList>
            <person name="Church D.M."/>
            <person name="Goodstadt L."/>
            <person name="Hillier L.W."/>
            <person name="Zody M.C."/>
            <person name="Goldstein S."/>
            <person name="She X."/>
            <person name="Bult C.J."/>
            <person name="Agarwala R."/>
            <person name="Cherry J.L."/>
            <person name="DiCuccio M."/>
            <person name="Hlavina W."/>
            <person name="Kapustin Y."/>
            <person name="Meric P."/>
            <person name="Maglott D."/>
            <person name="Birtle Z."/>
            <person name="Marques A.C."/>
            <person name="Graves T."/>
            <person name="Zhou S."/>
            <person name="Teague B."/>
            <person name="Potamousis K."/>
            <person name="Churas C."/>
            <person name="Place M."/>
            <person name="Herschleb J."/>
            <person name="Runnheim R."/>
            <person name="Forrest D."/>
            <person name="Amos-Landgraf J."/>
            <person name="Schwartz D.C."/>
            <person name="Cheng Z."/>
            <person name="Lindblad-Toh K."/>
            <person name="Eichler E.E."/>
            <person name="Ponting C.P."/>
        </authorList>
    </citation>
    <scope>NUCLEOTIDE SEQUENCE [LARGE SCALE GENOMIC DNA]</scope>
    <source>
        <strain>C57BL/6J</strain>
    </source>
</reference>
<reference key="3">
    <citation type="journal article" date="2004" name="Genome Res.">
        <title>The status, quality, and expansion of the NIH full-length cDNA project: the Mammalian Gene Collection (MGC).</title>
        <authorList>
            <consortium name="The MGC Project Team"/>
        </authorList>
    </citation>
    <scope>NUCLEOTIDE SEQUENCE [LARGE SCALE MRNA]</scope>
    <source>
        <strain>C57BL/6J</strain>
        <tissue>Eye</tissue>
        <tissue>Head</tissue>
    </source>
</reference>
<name>FN3C1_MOUSE</name>
<organism>
    <name type="scientific">Mus musculus</name>
    <name type="common">Mouse</name>
    <dbReference type="NCBI Taxonomy" id="10090"/>
    <lineage>
        <taxon>Eukaryota</taxon>
        <taxon>Metazoa</taxon>
        <taxon>Chordata</taxon>
        <taxon>Craniata</taxon>
        <taxon>Vertebrata</taxon>
        <taxon>Euteleostomi</taxon>
        <taxon>Mammalia</taxon>
        <taxon>Eutheria</taxon>
        <taxon>Euarchontoglires</taxon>
        <taxon>Glires</taxon>
        <taxon>Rodentia</taxon>
        <taxon>Myomorpha</taxon>
        <taxon>Muroidea</taxon>
        <taxon>Muridae</taxon>
        <taxon>Murinae</taxon>
        <taxon>Mus</taxon>
        <taxon>Mus</taxon>
    </lineage>
</organism>
<sequence>MEHQLSPILSEIPPTVPVINGEPMCPVENYLLDPNAMAVCSNHSQIMTQHKMYNTWTCPQYWSQIVFVQVNPGEILTIKADDGSIQNIQGPADVPLIAPTGNLPPIYLPPGYMSQVVEENGIQKIVIVPQTLDYHVPMTAPVQQPFVAAPLLTYPQAPQLLYSPVQGEIPVPSYIQEPQQIPPLPLLPPLPLLPPAATFLFQEHLETYPQGRVNHNQFDERTVKIGEYSKKKIRDRQLGEHKINSTFSDTTLLLNKDIDMPAPPDSLCPYTVDTAPGTNTDNSTSDTYSLNTVLNTCTIDSAPRNMADNIPDTNTTDTITSSSAHTPSISTSNATFCSDNNNNITDSSISNYNQVTYDETHKPPDAKSIPSCTSQSASNPSVSENAHNPSSINDGLRPSDVASISENDHEETEANMGAGDNKQILGENQKKSQSSNASLKEHNTEDRTQPGCFNIEKPVVSNIQTRSATVSWTRKSNEKYDINSSMTHELALSSNGKNGTYKNIYTGNGVTVVLHDLQPCMVYFLRVTTIRNAEHRSVSEVVSFTTPGCEPDPPLAPTLISRTKNSLSLQWKASNDNGSKISSFLLEWDEGKGEDFKSCYSGRLKQHKLFKLNPSTKYSFRLAAKNDFGCSNFSETAVFYTSGKTPPAPLPPKLKEAGIYSLSLEWCAPTNPNPNDTLTYVLEMEEAKSGLGFKPKYNGEDLTCTIRNLQRNTMYKFRIFAYNLEGRSNPSGEVKYTTRPARPGCPNKPYVVGTIHAHQVTIGWDLPKDNGGMNISSYSLEVCENSDSANLWKIIYSGTRQEFLYDDLQAATTYKLRVFCTSPAGQSRPSDVLTIQTPTLPPESCRSQPLRGKTKSKDANLPDNRSVNGKPEAHVRGKKAKGPHQDRKVHPSSEKKCALGSQSMECGSVPARHPPSQCGTPVLTCKGPTCVIVSWEIPKCNGAEIIDYRLQWGQVEDSMHLIYTGPCLRYEVKGLVPATTYFCRVQAVNIVGVGMFGGTAKVTTPGTVPAMVPVLKEVESKVPAKLSSTCIAIRWEEPDCHGSPITGYNIEYGDKKVVTVKRITEYVLKDLQPNTTYRIRIQAINHYGLSPFSPSIRCKTKPLPPEPPQLNCVVYGHQSLRLKWGTVSSKKTLANFINYNVLMEDRSGRFSVIYRGPDVTHKVQKLSEYTEYKFKIQACNEAGEGPESDIYTFTTTKSPPTALKAPKVHPLNNNSCEIKWESLEPIKGDPIVYCLQVTTGKKANQIYKGPNTSFSFSNYHANSRYRFKVCAGRRYETSNGLQELWGPYSPSALFSTYKHHSGHGKGSGSKGKGNHNDKGEKCKTEMSDDTFVLTLLIGFALIAVLCAVAVQYLLIN</sequence>
<dbReference type="EMBL" id="DQ192038">
    <property type="protein sequence ID" value="ABA82151.1"/>
    <property type="molecule type" value="mRNA"/>
</dbReference>
<dbReference type="EMBL" id="AL807795">
    <property type="status" value="NOT_ANNOTATED_CDS"/>
    <property type="molecule type" value="Genomic_DNA"/>
</dbReference>
<dbReference type="EMBL" id="BC076625">
    <property type="protein sequence ID" value="AAH76625.1"/>
    <property type="molecule type" value="mRNA"/>
</dbReference>
<dbReference type="EMBL" id="BC085176">
    <property type="protein sequence ID" value="AAH85176.1"/>
    <property type="molecule type" value="mRNA"/>
</dbReference>
<dbReference type="CCDS" id="CCDS30342.1"/>
<dbReference type="RefSeq" id="NP_001007581.1">
    <property type="nucleotide sequence ID" value="NM_001007580.1"/>
</dbReference>
<dbReference type="RefSeq" id="XP_006528166.1">
    <property type="nucleotide sequence ID" value="XM_006528103.3"/>
</dbReference>
<dbReference type="RefSeq" id="XP_006528167.1">
    <property type="nucleotide sequence ID" value="XM_006528104.5"/>
</dbReference>
<dbReference type="RefSeq" id="XP_006528169.1">
    <property type="nucleotide sequence ID" value="XM_006528106.4"/>
</dbReference>
<dbReference type="RefSeq" id="XP_017174016.1">
    <property type="nucleotide sequence ID" value="XM_017318527.2"/>
</dbReference>
<dbReference type="SMR" id="Q6DFV6"/>
<dbReference type="FunCoup" id="Q6DFV6">
    <property type="interactions" value="4"/>
</dbReference>
<dbReference type="STRING" id="10090.ENSMUSP00000038678"/>
<dbReference type="iPTMnet" id="Q6DFV6"/>
<dbReference type="PhosphoSitePlus" id="Q6DFV6"/>
<dbReference type="SwissPalm" id="Q6DFV6"/>
<dbReference type="PaxDb" id="10090-ENSMUSP00000038678"/>
<dbReference type="PeptideAtlas" id="Q6DFV6"/>
<dbReference type="DNASU" id="333564"/>
<dbReference type="Ensembl" id="ENSMUST00000039447.14">
    <property type="protein sequence ID" value="ENSMUSP00000038678.8"/>
    <property type="gene ID" value="ENSMUSG00000033737.15"/>
</dbReference>
<dbReference type="GeneID" id="333564"/>
<dbReference type="KEGG" id="mmu:333564"/>
<dbReference type="UCSC" id="uc009ubs.1">
    <property type="organism name" value="mouse"/>
</dbReference>
<dbReference type="AGR" id="MGI:2685630"/>
<dbReference type="CTD" id="333564"/>
<dbReference type="MGI" id="MGI:2685630">
    <property type="gene designation" value="Fndc3c1"/>
</dbReference>
<dbReference type="VEuPathDB" id="HostDB:ENSMUSG00000033737"/>
<dbReference type="eggNOG" id="ENOG502SGM2">
    <property type="taxonomic scope" value="Eukaryota"/>
</dbReference>
<dbReference type="GeneTree" id="ENSGT00940000163592"/>
<dbReference type="HOGENOM" id="CLU_004152_0_0_1"/>
<dbReference type="InParanoid" id="Q6DFV6"/>
<dbReference type="OMA" id="YSHGRAN"/>
<dbReference type="OrthoDB" id="443915at2759"/>
<dbReference type="PhylomeDB" id="Q6DFV6"/>
<dbReference type="TreeFam" id="TF316401"/>
<dbReference type="BioGRID-ORCS" id="333564">
    <property type="hits" value="4 hits in 77 CRISPR screens"/>
</dbReference>
<dbReference type="ChiTaRS" id="Fndc3c1">
    <property type="organism name" value="mouse"/>
</dbReference>
<dbReference type="PRO" id="PR:Q6DFV6"/>
<dbReference type="Proteomes" id="UP000000589">
    <property type="component" value="Chromosome X"/>
</dbReference>
<dbReference type="RNAct" id="Q6DFV6">
    <property type="molecule type" value="protein"/>
</dbReference>
<dbReference type="Bgee" id="ENSMUSG00000033737">
    <property type="expression patterns" value="Expressed in 1st arch mandibular component and 82 other cell types or tissues"/>
</dbReference>
<dbReference type="ExpressionAtlas" id="Q6DFV6">
    <property type="expression patterns" value="baseline and differential"/>
</dbReference>
<dbReference type="GO" id="GO:0016020">
    <property type="term" value="C:membrane"/>
    <property type="evidence" value="ECO:0007669"/>
    <property type="project" value="UniProtKB-SubCell"/>
</dbReference>
<dbReference type="CDD" id="cd00063">
    <property type="entry name" value="FN3"/>
    <property type="match status" value="7"/>
</dbReference>
<dbReference type="FunFam" id="2.60.40.10:FF:000180">
    <property type="entry name" value="Fibronectin type III domain containing 3A"/>
    <property type="match status" value="1"/>
</dbReference>
<dbReference type="FunFam" id="2.60.40.10:FF:000373">
    <property type="entry name" value="fibronectin type-III domain-containing protein 3A isoform X1"/>
    <property type="match status" value="1"/>
</dbReference>
<dbReference type="FunFam" id="2.60.40.10:FF:001846">
    <property type="entry name" value="Uncharacterized protein, isoform E"/>
    <property type="match status" value="1"/>
</dbReference>
<dbReference type="Gene3D" id="2.60.40.10">
    <property type="entry name" value="Immunoglobulins"/>
    <property type="match status" value="8"/>
</dbReference>
<dbReference type="InterPro" id="IPR003961">
    <property type="entry name" value="FN3_dom"/>
</dbReference>
<dbReference type="InterPro" id="IPR036116">
    <property type="entry name" value="FN3_sf"/>
</dbReference>
<dbReference type="InterPro" id="IPR013783">
    <property type="entry name" value="Ig-like_fold"/>
</dbReference>
<dbReference type="InterPro" id="IPR050964">
    <property type="entry name" value="Striated_Muscle_Regulatory"/>
</dbReference>
<dbReference type="PANTHER" id="PTHR13817:SF73">
    <property type="entry name" value="FIBRONECTIN TYPE-III DOMAIN-CONTAINING PROTEIN"/>
    <property type="match status" value="1"/>
</dbReference>
<dbReference type="PANTHER" id="PTHR13817">
    <property type="entry name" value="TITIN"/>
    <property type="match status" value="1"/>
</dbReference>
<dbReference type="Pfam" id="PF00041">
    <property type="entry name" value="fn3"/>
    <property type="match status" value="5"/>
</dbReference>
<dbReference type="PRINTS" id="PR00014">
    <property type="entry name" value="FNTYPEIII"/>
</dbReference>
<dbReference type="SMART" id="SM00060">
    <property type="entry name" value="FN3"/>
    <property type="match status" value="8"/>
</dbReference>
<dbReference type="SUPFAM" id="SSF49265">
    <property type="entry name" value="Fibronectin type III"/>
    <property type="match status" value="5"/>
</dbReference>
<dbReference type="PROSITE" id="PS50853">
    <property type="entry name" value="FN3"/>
    <property type="match status" value="8"/>
</dbReference>
<keyword id="KW-0472">Membrane</keyword>
<keyword id="KW-1185">Reference proteome</keyword>
<keyword id="KW-0677">Repeat</keyword>
<keyword id="KW-0812">Transmembrane</keyword>
<keyword id="KW-1133">Transmembrane helix</keyword>
<evidence type="ECO:0000250" key="1"/>
<evidence type="ECO:0000255" key="2"/>
<evidence type="ECO:0000255" key="3">
    <source>
        <dbReference type="PROSITE-ProRule" id="PRU00316"/>
    </source>
</evidence>
<evidence type="ECO:0000256" key="4">
    <source>
        <dbReference type="SAM" id="MobiDB-lite"/>
    </source>
</evidence>
<evidence type="ECO:0000305" key="5"/>
<protein>
    <recommendedName>
        <fullName>Fibronectin type III domain containing protein 3C1</fullName>
    </recommendedName>
</protein>
<gene>
    <name type="primary">Fndc3c1</name>
    <name type="synonym">Fndc3c</name>
    <name type="synonym">Gm784</name>
</gene>